<accession>Q28V48</accession>
<comment type="catalytic activity">
    <reaction evidence="1">
        <text>2-(N(omega)-L-arginino)succinate = fumarate + L-arginine</text>
        <dbReference type="Rhea" id="RHEA:24020"/>
        <dbReference type="ChEBI" id="CHEBI:29806"/>
        <dbReference type="ChEBI" id="CHEBI:32682"/>
        <dbReference type="ChEBI" id="CHEBI:57472"/>
        <dbReference type="EC" id="4.3.2.1"/>
    </reaction>
</comment>
<comment type="pathway">
    <text evidence="1">Amino-acid biosynthesis; L-arginine biosynthesis; L-arginine from L-ornithine and carbamoyl phosphate: step 3/3.</text>
</comment>
<comment type="subcellular location">
    <subcellularLocation>
        <location evidence="1">Cytoplasm</location>
    </subcellularLocation>
</comment>
<comment type="similarity">
    <text evidence="1">Belongs to the lyase 1 family. Argininosuccinate lyase subfamily.</text>
</comment>
<keyword id="KW-0028">Amino-acid biosynthesis</keyword>
<keyword id="KW-0055">Arginine biosynthesis</keyword>
<keyword id="KW-0963">Cytoplasm</keyword>
<keyword id="KW-0456">Lyase</keyword>
<keyword id="KW-1185">Reference proteome</keyword>
<gene>
    <name evidence="1" type="primary">argH</name>
    <name type="ordered locus">Jann_0497</name>
</gene>
<sequence length="476" mass="51473">MTDTGSSDTNTDTTGTSKANTMWGGRFAAGPDAIMEAINASISFDQRMARQDIEGSRAHAAMLAATGIVESSDVDVIREGLLTVLSEIEGGTFQYSTALEDIHMNVEARLTEIIGTPAGRLHTARSRNDQVATDFKLWVRDQMDAAISGIEALQRALLGQAEAGADWVMPGFTHLQTAQPVTWGHHMMAYVEMLGRDASRFRDARTRMNESPLGAAALAGTSFPIDRDMTAEALGFDRPSANSLDAVADRDFALEFLSAASICAMHLSRFAEELVIWSSAQFRFVALSDRFSTGSSIMPQKKNPDAAELIRAKIGRIFGANVALMTVMKGLPLTYSKDMQEDKEQTFDAADNLMLALAAMEGMVRDMQANVPSLEAAASSGFSTATDLADWLVRELNMPFREAHHVTGSLVKLAEDKGCDLPDLALSDMHSVHGDITDGVFDVLGVHNSVASRTSYGGTSPVQVREQVARWRDILG</sequence>
<feature type="chain" id="PRO_0000240735" description="Argininosuccinate lyase">
    <location>
        <begin position="1"/>
        <end position="476"/>
    </location>
</feature>
<feature type="region of interest" description="Disordered" evidence="2">
    <location>
        <begin position="1"/>
        <end position="22"/>
    </location>
</feature>
<feature type="compositionally biased region" description="Low complexity" evidence="2">
    <location>
        <begin position="1"/>
        <end position="17"/>
    </location>
</feature>
<reference key="1">
    <citation type="submission" date="2006-02" db="EMBL/GenBank/DDBJ databases">
        <title>Complete sequence of chromosome of Jannaschia sp. CCS1.</title>
        <authorList>
            <consortium name="US DOE Joint Genome Institute"/>
            <person name="Copeland A."/>
            <person name="Lucas S."/>
            <person name="Lapidus A."/>
            <person name="Barry K."/>
            <person name="Detter J.C."/>
            <person name="Glavina del Rio T."/>
            <person name="Hammon N."/>
            <person name="Israni S."/>
            <person name="Pitluck S."/>
            <person name="Brettin T."/>
            <person name="Bruce D."/>
            <person name="Han C."/>
            <person name="Tapia R."/>
            <person name="Gilna P."/>
            <person name="Chertkov O."/>
            <person name="Saunders E."/>
            <person name="Schmutz J."/>
            <person name="Larimer F."/>
            <person name="Land M."/>
            <person name="Kyrpides N."/>
            <person name="Lykidis A."/>
            <person name="Moran M.A."/>
            <person name="Belas R."/>
            <person name="Ye W."/>
            <person name="Buchan A."/>
            <person name="Gonzalez J.M."/>
            <person name="Schell M.A."/>
            <person name="Richardson P."/>
        </authorList>
    </citation>
    <scope>NUCLEOTIDE SEQUENCE [LARGE SCALE GENOMIC DNA]</scope>
    <source>
        <strain>CCS1</strain>
    </source>
</reference>
<dbReference type="EC" id="4.3.2.1" evidence="1"/>
<dbReference type="EMBL" id="CP000264">
    <property type="protein sequence ID" value="ABD53414.1"/>
    <property type="molecule type" value="Genomic_DNA"/>
</dbReference>
<dbReference type="RefSeq" id="WP_011453623.1">
    <property type="nucleotide sequence ID" value="NC_007802.1"/>
</dbReference>
<dbReference type="SMR" id="Q28V48"/>
<dbReference type="STRING" id="290400.Jann_0497"/>
<dbReference type="KEGG" id="jan:Jann_0497"/>
<dbReference type="eggNOG" id="COG0165">
    <property type="taxonomic scope" value="Bacteria"/>
</dbReference>
<dbReference type="HOGENOM" id="CLU_027272_2_3_5"/>
<dbReference type="OrthoDB" id="9769623at2"/>
<dbReference type="UniPathway" id="UPA00068">
    <property type="reaction ID" value="UER00114"/>
</dbReference>
<dbReference type="Proteomes" id="UP000008326">
    <property type="component" value="Chromosome"/>
</dbReference>
<dbReference type="GO" id="GO:0005829">
    <property type="term" value="C:cytosol"/>
    <property type="evidence" value="ECO:0007669"/>
    <property type="project" value="TreeGrafter"/>
</dbReference>
<dbReference type="GO" id="GO:0004056">
    <property type="term" value="F:argininosuccinate lyase activity"/>
    <property type="evidence" value="ECO:0007669"/>
    <property type="project" value="UniProtKB-UniRule"/>
</dbReference>
<dbReference type="GO" id="GO:0042450">
    <property type="term" value="P:arginine biosynthetic process via ornithine"/>
    <property type="evidence" value="ECO:0007669"/>
    <property type="project" value="InterPro"/>
</dbReference>
<dbReference type="GO" id="GO:0006526">
    <property type="term" value="P:L-arginine biosynthetic process"/>
    <property type="evidence" value="ECO:0007669"/>
    <property type="project" value="UniProtKB-UniRule"/>
</dbReference>
<dbReference type="CDD" id="cd01359">
    <property type="entry name" value="Argininosuccinate_lyase"/>
    <property type="match status" value="1"/>
</dbReference>
<dbReference type="FunFam" id="1.10.275.10:FF:000002">
    <property type="entry name" value="Argininosuccinate lyase"/>
    <property type="match status" value="1"/>
</dbReference>
<dbReference type="FunFam" id="1.10.40.30:FF:000001">
    <property type="entry name" value="Argininosuccinate lyase"/>
    <property type="match status" value="1"/>
</dbReference>
<dbReference type="FunFam" id="1.20.200.10:FF:000015">
    <property type="entry name" value="argininosuccinate lyase isoform X2"/>
    <property type="match status" value="1"/>
</dbReference>
<dbReference type="Gene3D" id="1.10.40.30">
    <property type="entry name" value="Fumarase/aspartase (C-terminal domain)"/>
    <property type="match status" value="1"/>
</dbReference>
<dbReference type="Gene3D" id="1.20.200.10">
    <property type="entry name" value="Fumarase/aspartase (Central domain)"/>
    <property type="match status" value="1"/>
</dbReference>
<dbReference type="Gene3D" id="1.10.275.10">
    <property type="entry name" value="Fumarase/aspartase (N-terminal domain)"/>
    <property type="match status" value="1"/>
</dbReference>
<dbReference type="HAMAP" id="MF_00006">
    <property type="entry name" value="Arg_succ_lyase"/>
    <property type="match status" value="1"/>
</dbReference>
<dbReference type="InterPro" id="IPR029419">
    <property type="entry name" value="Arg_succ_lyase_C"/>
</dbReference>
<dbReference type="InterPro" id="IPR009049">
    <property type="entry name" value="Argininosuccinate_lyase"/>
</dbReference>
<dbReference type="InterPro" id="IPR024083">
    <property type="entry name" value="Fumarase/histidase_N"/>
</dbReference>
<dbReference type="InterPro" id="IPR020557">
    <property type="entry name" value="Fumarate_lyase_CS"/>
</dbReference>
<dbReference type="InterPro" id="IPR000362">
    <property type="entry name" value="Fumarate_lyase_fam"/>
</dbReference>
<dbReference type="InterPro" id="IPR022761">
    <property type="entry name" value="Fumarate_lyase_N"/>
</dbReference>
<dbReference type="InterPro" id="IPR008948">
    <property type="entry name" value="L-Aspartase-like"/>
</dbReference>
<dbReference type="NCBIfam" id="TIGR00838">
    <property type="entry name" value="argH"/>
    <property type="match status" value="1"/>
</dbReference>
<dbReference type="PANTHER" id="PTHR43814">
    <property type="entry name" value="ARGININOSUCCINATE LYASE"/>
    <property type="match status" value="1"/>
</dbReference>
<dbReference type="PANTHER" id="PTHR43814:SF1">
    <property type="entry name" value="ARGININOSUCCINATE LYASE"/>
    <property type="match status" value="1"/>
</dbReference>
<dbReference type="Pfam" id="PF14698">
    <property type="entry name" value="ASL_C2"/>
    <property type="match status" value="1"/>
</dbReference>
<dbReference type="Pfam" id="PF00206">
    <property type="entry name" value="Lyase_1"/>
    <property type="match status" value="1"/>
</dbReference>
<dbReference type="PRINTS" id="PR00145">
    <property type="entry name" value="ARGSUCLYASE"/>
</dbReference>
<dbReference type="PRINTS" id="PR00149">
    <property type="entry name" value="FUMRATELYASE"/>
</dbReference>
<dbReference type="SUPFAM" id="SSF48557">
    <property type="entry name" value="L-aspartase-like"/>
    <property type="match status" value="1"/>
</dbReference>
<dbReference type="PROSITE" id="PS00163">
    <property type="entry name" value="FUMARATE_LYASES"/>
    <property type="match status" value="1"/>
</dbReference>
<evidence type="ECO:0000255" key="1">
    <source>
        <dbReference type="HAMAP-Rule" id="MF_00006"/>
    </source>
</evidence>
<evidence type="ECO:0000256" key="2">
    <source>
        <dbReference type="SAM" id="MobiDB-lite"/>
    </source>
</evidence>
<name>ARLY_JANSC</name>
<proteinExistence type="inferred from homology"/>
<protein>
    <recommendedName>
        <fullName evidence="1">Argininosuccinate lyase</fullName>
        <shortName evidence="1">ASAL</shortName>
        <ecNumber evidence="1">4.3.2.1</ecNumber>
    </recommendedName>
    <alternativeName>
        <fullName evidence="1">Arginosuccinase</fullName>
    </alternativeName>
</protein>
<organism>
    <name type="scientific">Jannaschia sp. (strain CCS1)</name>
    <dbReference type="NCBI Taxonomy" id="290400"/>
    <lineage>
        <taxon>Bacteria</taxon>
        <taxon>Pseudomonadati</taxon>
        <taxon>Pseudomonadota</taxon>
        <taxon>Alphaproteobacteria</taxon>
        <taxon>Rhodobacterales</taxon>
        <taxon>Roseobacteraceae</taxon>
        <taxon>Jannaschia</taxon>
    </lineage>
</organism>